<sequence length="172" mass="18883">MKFAQPHNPLLPSVPDIVFSAIVLAIVLPFFWWFVIPRISKLLSDRSSLIEGKISEAASAHARALETLELRKQQLDEAKSEASQIRQEARDDAQLILQQARETADETAERVMLHAREQIQAEKAAALLSLRSEIATLALAAAGKAVSEKLDDDKKSRELVSASIAKMAEDAG</sequence>
<proteinExistence type="inferred from homology"/>
<organism>
    <name type="scientific">Tropheryma whipplei (strain TW08/27)</name>
    <name type="common">Whipple's bacillus</name>
    <dbReference type="NCBI Taxonomy" id="218496"/>
    <lineage>
        <taxon>Bacteria</taxon>
        <taxon>Bacillati</taxon>
        <taxon>Actinomycetota</taxon>
        <taxon>Actinomycetes</taxon>
        <taxon>Micrococcales</taxon>
        <taxon>Tropherymataceae</taxon>
        <taxon>Tropheryma</taxon>
    </lineage>
</organism>
<dbReference type="EMBL" id="BX251411">
    <property type="protein sequence ID" value="CAD67012.1"/>
    <property type="molecule type" value="Genomic_DNA"/>
</dbReference>
<dbReference type="RefSeq" id="WP_011096292.1">
    <property type="nucleotide sequence ID" value="NC_004551.1"/>
</dbReference>
<dbReference type="SMR" id="Q83HY4"/>
<dbReference type="GeneID" id="67388113"/>
<dbReference type="KEGG" id="tws:TW340"/>
<dbReference type="HOGENOM" id="CLU_079215_5_1_11"/>
<dbReference type="GO" id="GO:0005886">
    <property type="term" value="C:plasma membrane"/>
    <property type="evidence" value="ECO:0007669"/>
    <property type="project" value="UniProtKB-SubCell"/>
</dbReference>
<dbReference type="GO" id="GO:0045259">
    <property type="term" value="C:proton-transporting ATP synthase complex"/>
    <property type="evidence" value="ECO:0007669"/>
    <property type="project" value="UniProtKB-KW"/>
</dbReference>
<dbReference type="GO" id="GO:0046933">
    <property type="term" value="F:proton-transporting ATP synthase activity, rotational mechanism"/>
    <property type="evidence" value="ECO:0007669"/>
    <property type="project" value="UniProtKB-UniRule"/>
</dbReference>
<dbReference type="GO" id="GO:0046961">
    <property type="term" value="F:proton-transporting ATPase activity, rotational mechanism"/>
    <property type="evidence" value="ECO:0007669"/>
    <property type="project" value="TreeGrafter"/>
</dbReference>
<dbReference type="CDD" id="cd06503">
    <property type="entry name" value="ATP-synt_Fo_b"/>
    <property type="match status" value="1"/>
</dbReference>
<dbReference type="Gene3D" id="1.20.5.620">
    <property type="entry name" value="F1F0 ATP synthase subunit B, membrane domain"/>
    <property type="match status" value="1"/>
</dbReference>
<dbReference type="HAMAP" id="MF_01398">
    <property type="entry name" value="ATP_synth_b_bprime"/>
    <property type="match status" value="1"/>
</dbReference>
<dbReference type="InterPro" id="IPR028987">
    <property type="entry name" value="ATP_synth_B-like_membr_sf"/>
</dbReference>
<dbReference type="InterPro" id="IPR002146">
    <property type="entry name" value="ATP_synth_b/b'su_bac/chlpt"/>
</dbReference>
<dbReference type="InterPro" id="IPR005864">
    <property type="entry name" value="ATP_synth_F0_bsu_bac"/>
</dbReference>
<dbReference type="InterPro" id="IPR050059">
    <property type="entry name" value="ATP_synthase_B_chain"/>
</dbReference>
<dbReference type="NCBIfam" id="TIGR01144">
    <property type="entry name" value="ATP_synt_b"/>
    <property type="match status" value="1"/>
</dbReference>
<dbReference type="NCBIfam" id="NF004412">
    <property type="entry name" value="PRK05759.1-3"/>
    <property type="match status" value="1"/>
</dbReference>
<dbReference type="PANTHER" id="PTHR33445:SF1">
    <property type="entry name" value="ATP SYNTHASE SUBUNIT B"/>
    <property type="match status" value="1"/>
</dbReference>
<dbReference type="PANTHER" id="PTHR33445">
    <property type="entry name" value="ATP SYNTHASE SUBUNIT B', CHLOROPLASTIC"/>
    <property type="match status" value="1"/>
</dbReference>
<dbReference type="Pfam" id="PF00430">
    <property type="entry name" value="ATP-synt_B"/>
    <property type="match status" value="1"/>
</dbReference>
<dbReference type="SUPFAM" id="SSF81573">
    <property type="entry name" value="F1F0 ATP synthase subunit B, membrane domain"/>
    <property type="match status" value="1"/>
</dbReference>
<gene>
    <name evidence="1" type="primary">atpF</name>
    <name type="ordered locus">TW340</name>
</gene>
<comment type="function">
    <text evidence="1">F(1)F(0) ATP synthase produces ATP from ADP in the presence of a proton or sodium gradient. F-type ATPases consist of two structural domains, F(1) containing the extramembraneous catalytic core and F(0) containing the membrane proton channel, linked together by a central stalk and a peripheral stalk. During catalysis, ATP synthesis in the catalytic domain of F(1) is coupled via a rotary mechanism of the central stalk subunits to proton translocation.</text>
</comment>
<comment type="function">
    <text evidence="1">Component of the F(0) channel, it forms part of the peripheral stalk, linking F(1) to F(0).</text>
</comment>
<comment type="subunit">
    <text evidence="1">F-type ATPases have 2 components, F(1) - the catalytic core - and F(0) - the membrane proton channel. F(1) has five subunits: alpha(3), beta(3), gamma(1), delta(1), epsilon(1). F(0) has three main subunits: a(1), b(2) and c(10-14). The alpha and beta chains form an alternating ring which encloses part of the gamma chain. F(1) is attached to F(0) by a central stalk formed by the gamma and epsilon chains, while a peripheral stalk is formed by the delta and b chains.</text>
</comment>
<comment type="subcellular location">
    <subcellularLocation>
        <location evidence="1">Cell membrane</location>
        <topology evidence="1">Single-pass membrane protein</topology>
    </subcellularLocation>
</comment>
<comment type="similarity">
    <text evidence="1">Belongs to the ATPase B chain family.</text>
</comment>
<name>ATPF_TROW8</name>
<accession>Q83HY4</accession>
<protein>
    <recommendedName>
        <fullName evidence="1">ATP synthase subunit b</fullName>
    </recommendedName>
    <alternativeName>
        <fullName evidence="1">ATP synthase F(0) sector subunit b</fullName>
    </alternativeName>
    <alternativeName>
        <fullName evidence="1">ATPase subunit I</fullName>
    </alternativeName>
    <alternativeName>
        <fullName evidence="1">F-type ATPase subunit b</fullName>
        <shortName evidence="1">F-ATPase subunit b</shortName>
    </alternativeName>
</protein>
<evidence type="ECO:0000255" key="1">
    <source>
        <dbReference type="HAMAP-Rule" id="MF_01398"/>
    </source>
</evidence>
<keyword id="KW-0066">ATP synthesis</keyword>
<keyword id="KW-1003">Cell membrane</keyword>
<keyword id="KW-0138">CF(0)</keyword>
<keyword id="KW-0375">Hydrogen ion transport</keyword>
<keyword id="KW-0406">Ion transport</keyword>
<keyword id="KW-0472">Membrane</keyword>
<keyword id="KW-0812">Transmembrane</keyword>
<keyword id="KW-1133">Transmembrane helix</keyword>
<keyword id="KW-0813">Transport</keyword>
<feature type="chain" id="PRO_0000368849" description="ATP synthase subunit b">
    <location>
        <begin position="1"/>
        <end position="172"/>
    </location>
</feature>
<feature type="transmembrane region" description="Helical" evidence="1">
    <location>
        <begin position="17"/>
        <end position="37"/>
    </location>
</feature>
<reference key="1">
    <citation type="journal article" date="2003" name="Lancet">
        <title>Sequencing and analysis of the genome of the Whipple's disease bacterium Tropheryma whipplei.</title>
        <authorList>
            <person name="Bentley S.D."/>
            <person name="Maiwald M."/>
            <person name="Murphy L.D."/>
            <person name="Pallen M.J."/>
            <person name="Yeats C.A."/>
            <person name="Dover L.G."/>
            <person name="Norbertczak H.T."/>
            <person name="Besra G.S."/>
            <person name="Quail M.A."/>
            <person name="Harris D.E."/>
            <person name="von Herbay A."/>
            <person name="Goble A."/>
            <person name="Rutter S."/>
            <person name="Squares R."/>
            <person name="Squares S."/>
            <person name="Barrell B.G."/>
            <person name="Parkhill J."/>
            <person name="Relman D.A."/>
        </authorList>
    </citation>
    <scope>NUCLEOTIDE SEQUENCE [LARGE SCALE GENOMIC DNA]</scope>
    <source>
        <strain>TW08/27</strain>
    </source>
</reference>